<evidence type="ECO:0000255" key="1">
    <source>
        <dbReference type="HAMAP-Rule" id="MF_00255"/>
    </source>
</evidence>
<name>SYGB_LACH4</name>
<gene>
    <name evidence="1" type="primary">glyS</name>
    <name type="ordered locus">lhv_1298</name>
</gene>
<feature type="chain" id="PRO_1000071879" description="Glycine--tRNA ligase beta subunit">
    <location>
        <begin position="1"/>
        <end position="687"/>
    </location>
</feature>
<comment type="catalytic activity">
    <reaction evidence="1">
        <text>tRNA(Gly) + glycine + ATP = glycyl-tRNA(Gly) + AMP + diphosphate</text>
        <dbReference type="Rhea" id="RHEA:16013"/>
        <dbReference type="Rhea" id="RHEA-COMP:9664"/>
        <dbReference type="Rhea" id="RHEA-COMP:9683"/>
        <dbReference type="ChEBI" id="CHEBI:30616"/>
        <dbReference type="ChEBI" id="CHEBI:33019"/>
        <dbReference type="ChEBI" id="CHEBI:57305"/>
        <dbReference type="ChEBI" id="CHEBI:78442"/>
        <dbReference type="ChEBI" id="CHEBI:78522"/>
        <dbReference type="ChEBI" id="CHEBI:456215"/>
        <dbReference type="EC" id="6.1.1.14"/>
    </reaction>
</comment>
<comment type="subunit">
    <text evidence="1">Tetramer of two alpha and two beta subunits.</text>
</comment>
<comment type="subcellular location">
    <subcellularLocation>
        <location evidence="1">Cytoplasm</location>
    </subcellularLocation>
</comment>
<comment type="similarity">
    <text evidence="1">Belongs to the class-II aminoacyl-tRNA synthetase family.</text>
</comment>
<keyword id="KW-0030">Aminoacyl-tRNA synthetase</keyword>
<keyword id="KW-0067">ATP-binding</keyword>
<keyword id="KW-0963">Cytoplasm</keyword>
<keyword id="KW-0436">Ligase</keyword>
<keyword id="KW-0547">Nucleotide-binding</keyword>
<keyword id="KW-0648">Protein biosynthesis</keyword>
<reference key="1">
    <citation type="journal article" date="2008" name="J. Bacteriol.">
        <title>Genome sequence of Lactobacillus helveticus: an organism distinguished by selective gene loss and IS element expansion.</title>
        <authorList>
            <person name="Callanan M."/>
            <person name="Kaleta P."/>
            <person name="O'Callaghan J."/>
            <person name="O'Sullivan O."/>
            <person name="Jordan K."/>
            <person name="McAuliffe O."/>
            <person name="Sangrador-Vegas A."/>
            <person name="Slattery L."/>
            <person name="Fitzgerald G.F."/>
            <person name="Beresford T."/>
            <person name="Ross R.P."/>
        </authorList>
    </citation>
    <scope>NUCLEOTIDE SEQUENCE [LARGE SCALE GENOMIC DNA]</scope>
    <source>
        <strain>DPC 4571</strain>
    </source>
</reference>
<organism>
    <name type="scientific">Lactobacillus helveticus (strain DPC 4571)</name>
    <dbReference type="NCBI Taxonomy" id="405566"/>
    <lineage>
        <taxon>Bacteria</taxon>
        <taxon>Bacillati</taxon>
        <taxon>Bacillota</taxon>
        <taxon>Bacilli</taxon>
        <taxon>Lactobacillales</taxon>
        <taxon>Lactobacillaceae</taxon>
        <taxon>Lactobacillus</taxon>
    </lineage>
</organism>
<accession>A8YVM4</accession>
<dbReference type="EC" id="6.1.1.14" evidence="1"/>
<dbReference type="EMBL" id="CP000517">
    <property type="protein sequence ID" value="ABX27311.1"/>
    <property type="molecule type" value="Genomic_DNA"/>
</dbReference>
<dbReference type="RefSeq" id="WP_003628907.1">
    <property type="nucleotide sequence ID" value="NC_010080.1"/>
</dbReference>
<dbReference type="SMR" id="A8YVM4"/>
<dbReference type="KEGG" id="lhe:lhv_1298"/>
<dbReference type="eggNOG" id="COG0751">
    <property type="taxonomic scope" value="Bacteria"/>
</dbReference>
<dbReference type="HOGENOM" id="CLU_007220_2_2_9"/>
<dbReference type="Proteomes" id="UP000000790">
    <property type="component" value="Chromosome"/>
</dbReference>
<dbReference type="GO" id="GO:0005829">
    <property type="term" value="C:cytosol"/>
    <property type="evidence" value="ECO:0007669"/>
    <property type="project" value="TreeGrafter"/>
</dbReference>
<dbReference type="GO" id="GO:0004814">
    <property type="term" value="F:arginine-tRNA ligase activity"/>
    <property type="evidence" value="ECO:0007669"/>
    <property type="project" value="InterPro"/>
</dbReference>
<dbReference type="GO" id="GO:0005524">
    <property type="term" value="F:ATP binding"/>
    <property type="evidence" value="ECO:0007669"/>
    <property type="project" value="UniProtKB-UniRule"/>
</dbReference>
<dbReference type="GO" id="GO:0004820">
    <property type="term" value="F:glycine-tRNA ligase activity"/>
    <property type="evidence" value="ECO:0007669"/>
    <property type="project" value="UniProtKB-UniRule"/>
</dbReference>
<dbReference type="GO" id="GO:0006420">
    <property type="term" value="P:arginyl-tRNA aminoacylation"/>
    <property type="evidence" value="ECO:0007669"/>
    <property type="project" value="InterPro"/>
</dbReference>
<dbReference type="GO" id="GO:0006426">
    <property type="term" value="P:glycyl-tRNA aminoacylation"/>
    <property type="evidence" value="ECO:0007669"/>
    <property type="project" value="UniProtKB-UniRule"/>
</dbReference>
<dbReference type="HAMAP" id="MF_00255">
    <property type="entry name" value="Gly_tRNA_synth_beta"/>
    <property type="match status" value="1"/>
</dbReference>
<dbReference type="InterPro" id="IPR008909">
    <property type="entry name" value="DALR_anticod-bd"/>
</dbReference>
<dbReference type="InterPro" id="IPR015944">
    <property type="entry name" value="Gly-tRNA-synth_bsu"/>
</dbReference>
<dbReference type="InterPro" id="IPR006194">
    <property type="entry name" value="Gly-tRNA-synth_heterodimer"/>
</dbReference>
<dbReference type="NCBIfam" id="TIGR00211">
    <property type="entry name" value="glyS"/>
    <property type="match status" value="1"/>
</dbReference>
<dbReference type="PANTHER" id="PTHR30075:SF2">
    <property type="entry name" value="GLYCINE--TRNA LIGASE, CHLOROPLASTIC_MITOCHONDRIAL 2"/>
    <property type="match status" value="1"/>
</dbReference>
<dbReference type="PANTHER" id="PTHR30075">
    <property type="entry name" value="GLYCYL-TRNA SYNTHETASE"/>
    <property type="match status" value="1"/>
</dbReference>
<dbReference type="Pfam" id="PF05746">
    <property type="entry name" value="DALR_1"/>
    <property type="match status" value="1"/>
</dbReference>
<dbReference type="Pfam" id="PF02092">
    <property type="entry name" value="tRNA_synt_2f"/>
    <property type="match status" value="1"/>
</dbReference>
<dbReference type="PRINTS" id="PR01045">
    <property type="entry name" value="TRNASYNTHGB"/>
</dbReference>
<dbReference type="SUPFAM" id="SSF109604">
    <property type="entry name" value="HD-domain/PDEase-like"/>
    <property type="match status" value="1"/>
</dbReference>
<dbReference type="PROSITE" id="PS50861">
    <property type="entry name" value="AA_TRNA_LIGASE_II_GLYAB"/>
    <property type="match status" value="1"/>
</dbReference>
<proteinExistence type="inferred from homology"/>
<sequence length="687" mass="78504">MAKDYLFEIGTEEIPAHVVPRSVKQLADRTRKFLKENGLKFKDIKTFSTPRRLTILVEDLAEKQDDIDEVKKGPAKKITQDADGNWTKAAQGFARGQGMTTDDIYFEELKGTEYAYVHVQKEGKKASDILLGMSDIIKAMTFPTKMRWDSNDFEFVRPIHWLVSLFGSDVIPVKILDITAGRKTQGHRFLGDSVVLANADDYEDALKDQYVIANAEERKDMIVNQMNELVKKNHWQIKPDRDLLEEVTYLVEYPTVFAGSFDEKYLNIPDEVLITSMKDNQRYFEVYDENGKLINHFIAVRNGNKDYLDNIISGNEKVLVARLDDAQFFYDEDRKYPLSHFVDRLKNVSFHDKIGSMAEKIQRVRMIGDYLAKRWDLPENVVTDFDRASELYKFDLVTQMVGEFAELQGVMGMHYARLAGEDEEVSVAIKEHYMPATAEGPLPETTVGSLLSVADKIDTIITFFGAGMIPTSSNDPYALRRYAYGIVRILLNEKWSLPFNEVLPEIINMLGGVTPAKLPKGDSEQEIADFIRDRVKQYLQKNKFKYDIVDAVLASSQQDPSQILAAANVLQLHHDDEEFKPVVESLTRINNILKKAKFNGKVDVDESLFVDNSETELYARVQNLQNIESLADLYQGFVHLQPVIDQYFEANMIMDKDENVKNNRLAQLYAVSELADRLGDLSKLVIK</sequence>
<protein>
    <recommendedName>
        <fullName evidence="1">Glycine--tRNA ligase beta subunit</fullName>
        <ecNumber evidence="1">6.1.1.14</ecNumber>
    </recommendedName>
    <alternativeName>
        <fullName evidence="1">Glycyl-tRNA synthetase beta subunit</fullName>
        <shortName evidence="1">GlyRS</shortName>
    </alternativeName>
</protein>